<sequence>MEEDQEEPPSSSTSSESPEVVLKAPKAPTRRRKNSKKDRRQDMEVDDGEKESTAQYCKGFYDALRVMQTTNKYEFTGGAVSSPVLPVLQTAAFSPITPASASDMHTIVMSLLGNTPITSGPSIAPLSSPTLLPLVTSGDLDDLSMKILASSAIPGPPIISSSNSPDSSTTAVTTSQITAFQPLLNNFVSSTTASTSRPDKLNLTPPQQSAEIYAFNGVNSDDSDGGLDSRSASRCGMALDDQEKKKLERKRARNRQAATKCRQKKMDRIKELEEQVLHEKHRGQRLDAELLELNRALEHFRRTVEHHSGNGCPNNSIRV</sequence>
<proteinExistence type="evidence at protein level"/>
<protein>
    <recommendedName>
        <fullName evidence="12">Transcription factor jun-1</fullName>
    </recommendedName>
    <alternativeName>
        <fullName evidence="7">Transcription factor AP-1 subunit jun-1</fullName>
    </alternativeName>
</protein>
<accession>G5ECU7</accession>
<accession>B2CXX6</accession>
<accession>B2CXX7</accession>
<accession>B2CXX9</accession>
<accession>B5U8L4</accession>
<accession>G5EC66</accession>
<accession>G5EF64</accession>
<accession>Q5FC74</accession>
<evidence type="ECO:0000255" key="1">
    <source>
        <dbReference type="PROSITE-ProRule" id="PRU00978"/>
    </source>
</evidence>
<evidence type="ECO:0000256" key="2">
    <source>
        <dbReference type="SAM" id="MobiDB-lite"/>
    </source>
</evidence>
<evidence type="ECO:0000269" key="3">
    <source>
    </source>
</evidence>
<evidence type="ECO:0000269" key="4">
    <source>
    </source>
</evidence>
<evidence type="ECO:0000269" key="5">
    <source>
    </source>
</evidence>
<evidence type="ECO:0000303" key="6">
    <source>
    </source>
</evidence>
<evidence type="ECO:0000305" key="7"/>
<evidence type="ECO:0000305" key="8">
    <source>
    </source>
</evidence>
<evidence type="ECO:0000312" key="9">
    <source>
        <dbReference type="EMBL" id="ACB41727.1"/>
    </source>
</evidence>
<evidence type="ECO:0000312" key="10">
    <source>
        <dbReference type="EMBL" id="CAB76416.2"/>
    </source>
</evidence>
<evidence type="ECO:0000312" key="11">
    <source>
        <dbReference type="Proteomes" id="UP000001940"/>
    </source>
</evidence>
<evidence type="ECO:0000312" key="12">
    <source>
        <dbReference type="WormBase" id="T24H10.7a"/>
    </source>
</evidence>
<evidence type="ECO:0000312" key="13">
    <source>
        <dbReference type="WormBase" id="T24H10.7b"/>
    </source>
</evidence>
<evidence type="ECO:0000312" key="14">
    <source>
        <dbReference type="WormBase" id="T24H10.7c"/>
    </source>
</evidence>
<evidence type="ECO:0000312" key="15">
    <source>
        <dbReference type="WormBase" id="T24H10.7d"/>
    </source>
</evidence>
<evidence type="ECO:0000312" key="16">
    <source>
        <dbReference type="WormBase" id="T24H10.7e"/>
    </source>
</evidence>
<feature type="chain" id="PRO_0000432856" description="Transcription factor jun-1" evidence="7">
    <location>
        <begin position="1"/>
        <end position="319"/>
    </location>
</feature>
<feature type="domain" description="bZIP" evidence="1">
    <location>
        <begin position="244"/>
        <end position="307"/>
    </location>
</feature>
<feature type="region of interest" description="Disordered" evidence="2">
    <location>
        <begin position="1"/>
        <end position="52"/>
    </location>
</feature>
<feature type="region of interest" description="Disordered" evidence="2">
    <location>
        <begin position="216"/>
        <end position="264"/>
    </location>
</feature>
<feature type="region of interest" description="Basic motif" evidence="1">
    <location>
        <begin position="244"/>
        <end position="285"/>
    </location>
</feature>
<feature type="region of interest" description="Leucine-zipper" evidence="1">
    <location>
        <begin position="286"/>
        <end position="293"/>
    </location>
</feature>
<feature type="compositionally biased region" description="Low complexity" evidence="2">
    <location>
        <begin position="8"/>
        <end position="19"/>
    </location>
</feature>
<feature type="compositionally biased region" description="Basic residues" evidence="2">
    <location>
        <begin position="28"/>
        <end position="38"/>
    </location>
</feature>
<feature type="splice variant" id="VSP_057615" description="In isoform d." evidence="7">
    <original>MEEDQEEPPSSSTSSESPEVVLKAPKAPTRRRKNSKKDRRQDMEVDDGEKESTAQYCKGFYDALRVMQTTNKYEFTGGAVSSPVLPVLQTAAFSPITPASASDMHTIVMSLLGNTPITSGPSIAPLSSPTLLPLVTSGDLDDLSMKILASSAIPGPPIISSSNSPDSSTTAVTTSQITAFQPLLNNFVSSTTASTSRPDKLNLTPPQQSAEIYAFNGVNSDDSDGGLDSRSASRCG</original>
    <variation>MLNWGHHHNSYDEPSASSSSGSSSSSVAANLSVSYNSDSRNQGCMGGGQYSGNIGGGGGGYGDYSHIDPINM</variation>
    <location>
        <begin position="1"/>
        <end position="236"/>
    </location>
</feature>
<feature type="splice variant" id="VSP_057616" description="In isoform e." evidence="7">
    <original>MEEDQEEPPSSSTSSESPEVVLKAPKAPTRRRKNSKKDRRQDMEVDDGEKESTAQYCKGFYDALRVMQTTNKYEFTGGAVSSPVLPVLQTAAFSPITPASASDMHTIVMSLLGNTPITSGPSIAPLSSPTLLPLVTSGDLDDLSMKILASSAIPGPPIISSSNSPDSSTTAVTTSQITAFQPLLNNFVSSTTASTSRPDKLNLTPPQQSAEIYAFNGVNSDDSDGGLDSRSASRCG</original>
    <variation>MLNYQPPQWMNSLMNSNIPSSLTLTPTPQFPIMFSSTSPFNFCTSDSSSSPISADSTPKSSPFFGDANPKFPFFNFMNGDS</variation>
    <location>
        <begin position="1"/>
        <end position="236"/>
    </location>
</feature>
<feature type="splice variant" id="VSP_057617" description="In isoform f.">
    <original>MEEDQEEPPSSSTSSESPEVVLKAPKAPTRRRKNSKKDRRQDMEVDDGEKESTAQYCKGFYDALRVMQTTNKYEFTGGAVSSPVLPVLQTAAFSPITPASASDMHTIVMSLLGNTPITSGPSIAPLSSPTLLPLVTSGDLDDLSMKILASSAIPGPPIISSSNSPDSSTTAVTTSQITAFQPLLNNFVSSTTASTSRPDKLNLTPPQQSAEIYAFNGVNSDDSDGGLDSRSASRCG</original>
    <variation>MVWSSETFGMTPEEQIEW</variation>
    <location>
        <begin position="1"/>
        <end position="236"/>
    </location>
</feature>
<feature type="splice variant" id="VSP_057618" description="In isoform c." evidence="7">
    <location>
        <begin position="1"/>
        <end position="66"/>
    </location>
</feature>
<feature type="splice variant" id="VSP_057619" description="In isoform b." evidence="7">
    <original>EEDQEEPPSSSTSSESPEVVLKAPKAPTRRRKNSKKD</original>
    <variation>MNNSFDMNVTQHTNSSPY</variation>
    <location>
        <begin position="2"/>
        <end position="38"/>
    </location>
</feature>
<feature type="sequence conflict" description="In Ref. 2; ACB41728/CAI46586." evidence="7" ref="2">
    <original>D</original>
    <variation>G</variation>
    <location>
        <position position="199"/>
    </location>
</feature>
<feature type="sequence conflict" description="In Ref. 1; ACB41731." evidence="7" ref="1">
    <original>I</original>
    <variation>T</variation>
    <location sequence="G5ECU7-5">
        <position position="32"/>
    </location>
</feature>
<feature type="sequence conflict" description="In Ref. 1; ACB41731." evidence="7" ref="1">
    <original>F</original>
    <variation>Y</variation>
    <location sequence="G5ECU7-5">
        <position position="40"/>
    </location>
</feature>
<dbReference type="EMBL" id="EU553920">
    <property type="protein sequence ID" value="ACB41727.1"/>
    <property type="molecule type" value="mRNA"/>
</dbReference>
<dbReference type="EMBL" id="EU553921">
    <property type="protein sequence ID" value="ACB41728.1"/>
    <property type="molecule type" value="mRNA"/>
</dbReference>
<dbReference type="EMBL" id="EU553922">
    <property type="protein sequence ID" value="ACB41729.1"/>
    <property type="molecule type" value="mRNA"/>
</dbReference>
<dbReference type="EMBL" id="EU553923">
    <property type="protein sequence ID" value="ACB41730.1"/>
    <property type="molecule type" value="mRNA"/>
</dbReference>
<dbReference type="EMBL" id="EU553924">
    <property type="protein sequence ID" value="ACB41731.1"/>
    <property type="molecule type" value="mRNA"/>
</dbReference>
<dbReference type="EMBL" id="EU553925">
    <property type="protein sequence ID" value="ACB41732.1"/>
    <property type="molecule type" value="mRNA"/>
</dbReference>
<dbReference type="EMBL" id="Z54216">
    <property type="protein sequence ID" value="CAB76416.2"/>
    <property type="molecule type" value="Genomic_DNA"/>
</dbReference>
<dbReference type="EMBL" id="Z54216">
    <property type="protein sequence ID" value="CAI46586.1"/>
    <property type="status" value="ALT_INIT"/>
    <property type="molecule type" value="Genomic_DNA"/>
</dbReference>
<dbReference type="EMBL" id="Z54216">
    <property type="protein sequence ID" value="CAR64685.1"/>
    <property type="molecule type" value="Genomic_DNA"/>
</dbReference>
<dbReference type="EMBL" id="Z54216">
    <property type="protein sequence ID" value="CAN86906.1"/>
    <property type="molecule type" value="Genomic_DNA"/>
</dbReference>
<dbReference type="EMBL" id="Z54216">
    <property type="protein sequence ID" value="CAA90948.1"/>
    <property type="molecule type" value="Genomic_DNA"/>
</dbReference>
<dbReference type="PIR" id="T25255">
    <property type="entry name" value="T25255"/>
</dbReference>
<dbReference type="RefSeq" id="NP_001022366.1">
    <molecule id="G5ECU7-1"/>
    <property type="nucleotide sequence ID" value="NM_001027195.4"/>
</dbReference>
<dbReference type="RefSeq" id="NP_001022367.1">
    <property type="nucleotide sequence ID" value="NM_001027196.3"/>
</dbReference>
<dbReference type="RefSeq" id="NP_001022368.1">
    <molecule id="G5ECU7-6"/>
    <property type="nucleotide sequence ID" value="NM_001027197.5"/>
</dbReference>
<dbReference type="RefSeq" id="NP_001122643.1">
    <property type="nucleotide sequence ID" value="NM_001129171.2"/>
</dbReference>
<dbReference type="RefSeq" id="NP_001129827.1">
    <molecule id="G5ECU7-5"/>
    <property type="nucleotide sequence ID" value="NM_001136355.4"/>
</dbReference>
<dbReference type="RefSeq" id="NP_001343787.1">
    <molecule id="G5ECU7-3"/>
    <property type="nucleotide sequence ID" value="NM_001356879.3"/>
</dbReference>
<dbReference type="RefSeq" id="NP_001370235.1">
    <molecule id="G5ECU7-4"/>
    <property type="nucleotide sequence ID" value="NM_001383910.2"/>
</dbReference>
<dbReference type="SMR" id="G5ECU7"/>
<dbReference type="FunCoup" id="G5ECU7">
    <property type="interactions" value="339"/>
</dbReference>
<dbReference type="IntAct" id="G5ECU7">
    <property type="interactions" value="27"/>
</dbReference>
<dbReference type="STRING" id="6239.T24H10.7a.1"/>
<dbReference type="PaxDb" id="6239-T24H10.7a"/>
<dbReference type="PeptideAtlas" id="G5ECU7"/>
<dbReference type="EnsemblMetazoa" id="T24H10.7a.1">
    <molecule id="G5ECU7-1"/>
    <property type="protein sequence ID" value="T24H10.7a.1"/>
    <property type="gene ID" value="WBGene00012005"/>
</dbReference>
<dbReference type="EnsemblMetazoa" id="T24H10.7b.1">
    <property type="protein sequence ID" value="T24H10.7b.1"/>
    <property type="gene ID" value="WBGene00012005"/>
</dbReference>
<dbReference type="EnsemblMetazoa" id="T24H10.7c.1">
    <molecule id="G5ECU7-6"/>
    <property type="protein sequence ID" value="T24H10.7c.1"/>
    <property type="gene ID" value="WBGene00012005"/>
</dbReference>
<dbReference type="EnsemblMetazoa" id="T24H10.7d.1">
    <molecule id="G5ECU7-4"/>
    <property type="protein sequence ID" value="T24H10.7d.1"/>
    <property type="gene ID" value="WBGene00012005"/>
</dbReference>
<dbReference type="EnsemblMetazoa" id="T24H10.7e.1">
    <molecule id="G5ECU7-5"/>
    <property type="protein sequence ID" value="T24H10.7e.1"/>
    <property type="gene ID" value="WBGene00012005"/>
</dbReference>
<dbReference type="GeneID" id="174452"/>
<dbReference type="KEGG" id="cel:CELE_T24H10.7"/>
<dbReference type="UCSC" id="T24H10.7a">
    <property type="organism name" value="c. elegans"/>
</dbReference>
<dbReference type="AGR" id="WB:WBGene00012005"/>
<dbReference type="CTD" id="174452"/>
<dbReference type="WormBase" id="T24H10.7a">
    <molecule id="G5ECU7-1"/>
    <property type="protein sequence ID" value="CE37850"/>
    <property type="gene ID" value="WBGene00012005"/>
    <property type="gene designation" value="jun-1"/>
</dbReference>
<dbReference type="WormBase" id="T24H10.7b">
    <property type="protein sequence ID" value="CE37851"/>
    <property type="gene ID" value="WBGene00012005"/>
    <property type="gene designation" value="jun-1"/>
</dbReference>
<dbReference type="WormBase" id="T24H10.7c">
    <molecule id="G5ECU7-6"/>
    <property type="protein sequence ID" value="CE16461"/>
    <property type="gene ID" value="WBGene00012005"/>
    <property type="gene designation" value="jun-1"/>
</dbReference>
<dbReference type="WormBase" id="T24H10.7d">
    <molecule id="G5ECU7-4"/>
    <property type="protein sequence ID" value="CE41026"/>
    <property type="gene ID" value="WBGene00012005"/>
    <property type="gene designation" value="jun-1"/>
</dbReference>
<dbReference type="WormBase" id="T24H10.7e">
    <molecule id="G5ECU7-5"/>
    <property type="protein sequence ID" value="CE43044"/>
    <property type="gene ID" value="WBGene00012005"/>
    <property type="gene designation" value="jun-1"/>
</dbReference>
<dbReference type="eggNOG" id="KOG0837">
    <property type="taxonomic scope" value="Eukaryota"/>
</dbReference>
<dbReference type="InParanoid" id="G5ECU7"/>
<dbReference type="OMA" id="MVERHSV"/>
<dbReference type="OrthoDB" id="2187714at2759"/>
<dbReference type="Reactome" id="R-CEL-2559580">
    <property type="pathway name" value="Oxidative Stress Induced Senescence"/>
</dbReference>
<dbReference type="Reactome" id="R-CEL-2871796">
    <property type="pathway name" value="FCERI mediated MAPK activation"/>
</dbReference>
<dbReference type="Reactome" id="R-CEL-450341">
    <property type="pathway name" value="Activation of the AP-1 family of transcription factors"/>
</dbReference>
<dbReference type="SignaLink" id="G5ECU7"/>
<dbReference type="PRO" id="PR:G5ECU7"/>
<dbReference type="Proteomes" id="UP000001940">
    <property type="component" value="Chromosome II"/>
</dbReference>
<dbReference type="Bgee" id="WBGene00012005">
    <property type="expression patterns" value="Expressed in pharyngeal muscle cell (C elegans) and 3 other cell types or tissues"/>
</dbReference>
<dbReference type="ExpressionAtlas" id="G5ECU7">
    <property type="expression patterns" value="baseline and differential"/>
</dbReference>
<dbReference type="GO" id="GO:0005634">
    <property type="term" value="C:nucleus"/>
    <property type="evidence" value="ECO:0000314"/>
    <property type="project" value="WormBase"/>
</dbReference>
<dbReference type="GO" id="GO:0005667">
    <property type="term" value="C:transcription regulator complex"/>
    <property type="evidence" value="ECO:0000318"/>
    <property type="project" value="GO_Central"/>
</dbReference>
<dbReference type="GO" id="GO:0000981">
    <property type="term" value="F:DNA-binding transcription factor activity, RNA polymerase II-specific"/>
    <property type="evidence" value="ECO:0000318"/>
    <property type="project" value="GO_Central"/>
</dbReference>
<dbReference type="GO" id="GO:0000978">
    <property type="term" value="F:RNA polymerase II cis-regulatory region sequence-specific DNA binding"/>
    <property type="evidence" value="ECO:0000318"/>
    <property type="project" value="GO_Central"/>
</dbReference>
<dbReference type="GO" id="GO:0061629">
    <property type="term" value="F:RNA polymerase II-specific DNA-binding transcription factor binding"/>
    <property type="evidence" value="ECO:0000353"/>
    <property type="project" value="WormBase"/>
</dbReference>
<dbReference type="GO" id="GO:0043565">
    <property type="term" value="F:sequence-specific DNA binding"/>
    <property type="evidence" value="ECO:0000314"/>
    <property type="project" value="WormBase"/>
</dbReference>
<dbReference type="GO" id="GO:0008340">
    <property type="term" value="P:determination of adult lifespan"/>
    <property type="evidence" value="ECO:0000315"/>
    <property type="project" value="UniProtKB"/>
</dbReference>
<dbReference type="GO" id="GO:0010628">
    <property type="term" value="P:positive regulation of gene expression"/>
    <property type="evidence" value="ECO:0000315"/>
    <property type="project" value="UniProtKB"/>
</dbReference>
<dbReference type="GO" id="GO:0033120">
    <property type="term" value="P:positive regulation of RNA splicing"/>
    <property type="evidence" value="ECO:0000315"/>
    <property type="project" value="UniProtKB"/>
</dbReference>
<dbReference type="GO" id="GO:0045944">
    <property type="term" value="P:positive regulation of transcription by RNA polymerase II"/>
    <property type="evidence" value="ECO:0000318"/>
    <property type="project" value="GO_Central"/>
</dbReference>
<dbReference type="GO" id="GO:0051726">
    <property type="term" value="P:regulation of cell cycle"/>
    <property type="evidence" value="ECO:0000318"/>
    <property type="project" value="GO_Central"/>
</dbReference>
<dbReference type="GO" id="GO:0042127">
    <property type="term" value="P:regulation of cell population proliferation"/>
    <property type="evidence" value="ECO:0000318"/>
    <property type="project" value="GO_Central"/>
</dbReference>
<dbReference type="GO" id="GO:0042594">
    <property type="term" value="P:response to starvation"/>
    <property type="evidence" value="ECO:0000315"/>
    <property type="project" value="UniProtKB"/>
</dbReference>
<dbReference type="GO" id="GO:0048545">
    <property type="term" value="P:response to steroid hormone"/>
    <property type="evidence" value="ECO:0000318"/>
    <property type="project" value="GO_Central"/>
</dbReference>
<dbReference type="GO" id="GO:0009636">
    <property type="term" value="P:response to toxic substance"/>
    <property type="evidence" value="ECO:0000315"/>
    <property type="project" value="UniProtKB"/>
</dbReference>
<dbReference type="CDD" id="cd14696">
    <property type="entry name" value="bZIP_Jun"/>
    <property type="match status" value="1"/>
</dbReference>
<dbReference type="Gene3D" id="1.20.5.170">
    <property type="match status" value="1"/>
</dbReference>
<dbReference type="InterPro" id="IPR050946">
    <property type="entry name" value="AP-1_TF_bZIP"/>
</dbReference>
<dbReference type="InterPro" id="IPR004827">
    <property type="entry name" value="bZIP"/>
</dbReference>
<dbReference type="InterPro" id="IPR046347">
    <property type="entry name" value="bZIP_sf"/>
</dbReference>
<dbReference type="InterPro" id="IPR002112">
    <property type="entry name" value="Leuzip_Jun"/>
</dbReference>
<dbReference type="PANTHER" id="PTHR11462">
    <property type="entry name" value="JUN TRANSCRIPTION FACTOR-RELATED"/>
    <property type="match status" value="1"/>
</dbReference>
<dbReference type="PANTHER" id="PTHR11462:SF35">
    <property type="entry name" value="TRANSCRIPTION FACTOR JRA"/>
    <property type="match status" value="1"/>
</dbReference>
<dbReference type="PRINTS" id="PR00043">
    <property type="entry name" value="LEUZIPPRJUN"/>
</dbReference>
<dbReference type="SMART" id="SM00338">
    <property type="entry name" value="BRLZ"/>
    <property type="match status" value="1"/>
</dbReference>
<dbReference type="SUPFAM" id="SSF57959">
    <property type="entry name" value="Leucine zipper domain"/>
    <property type="match status" value="1"/>
</dbReference>
<dbReference type="PROSITE" id="PS50217">
    <property type="entry name" value="BZIP"/>
    <property type="match status" value="1"/>
</dbReference>
<dbReference type="PROSITE" id="PS00036">
    <property type="entry name" value="BZIP_BASIC"/>
    <property type="match status" value="1"/>
</dbReference>
<keyword id="KW-0025">Alternative splicing</keyword>
<keyword id="KW-0238">DNA-binding</keyword>
<keyword id="KW-0539">Nucleus</keyword>
<keyword id="KW-1185">Reference proteome</keyword>
<keyword id="KW-0804">Transcription</keyword>
<keyword id="KW-0805">Transcription regulation</keyword>
<gene>
    <name evidence="12" type="primary">jun-1</name>
    <name evidence="12" type="ORF">T24H10.7</name>
</gene>
<comment type="function">
    <text evidence="3 4">Transcription factor that recognizes and binds to the AP-1 non-canonical enhancer heptamer motif 5'-TTAGTCA-3' (PubMed:17942488). Required for ovulation (PubMed:19570917). Controls plc-1 expression in the spermatheca to regulate spermathecal valve dilation (PubMed:19570917).</text>
</comment>
<comment type="subunit">
    <text evidence="8">Heterodimer; with fos-1.</text>
</comment>
<comment type="interaction">
    <interactant intactId="EBI-2414388">
        <id>G5ECU7</id>
    </interactant>
    <interactant intactId="EBI-6728159">
        <id>G5ECG2</id>
        <label>fos-1</label>
    </interactant>
    <organismsDiffer>false</organismsDiffer>
    <experiments>3</experiments>
</comment>
<comment type="interaction">
    <interactant intactId="EBI-2414388">
        <id>G5ECU7</id>
    </interactant>
    <interactant intactId="EBI-2414392">
        <id>G5EBE5</id>
        <label>zip-5</label>
    </interactant>
    <organismsDiffer>false</organismsDiffer>
    <experiments>3</experiments>
</comment>
<comment type="subcellular location">
    <subcellularLocation>
        <location evidence="1 5">Nucleus</location>
    </subcellularLocation>
</comment>
<comment type="alternative products">
    <event type="alternative splicing"/>
    <isoform>
        <id>G5ECU7-1</id>
        <name evidence="12">a</name>
        <sequence type="displayed"/>
    </isoform>
    <isoform>
        <id>G5ECU7-2</id>
        <name evidence="13">b</name>
        <sequence type="described" ref="VSP_057619"/>
    </isoform>
    <isoform>
        <id>G5ECU7-3</id>
        <name evidence="14">c</name>
        <sequence type="described" ref="VSP_057618"/>
    </isoform>
    <isoform>
        <id>G5ECU7-4</id>
        <name evidence="15">d</name>
        <sequence type="described" ref="VSP_057615"/>
    </isoform>
    <isoform>
        <id>G5ECU7-5</id>
        <name evidence="16">e</name>
        <sequence type="described" ref="VSP_057616"/>
    </isoform>
    <isoform>
        <id>G5ECU7-6</id>
        <name evidence="6">f</name>
        <sequence type="described" ref="VSP_057617"/>
    </isoform>
</comment>
<comment type="tissue specificity">
    <text evidence="4 5">Isoform a, isoform b, isoform c and isoform d are expressed in the spermatheca (PubMed:19570917, PubMed:24178943).</text>
</comment>
<comment type="developmental stage">
    <text evidence="5">Expressed in all cells of the developing spermatheca and in the spermatheca-uterine junction core cells at larval stage L4.</text>
</comment>
<comment type="disruption phenotype">
    <text evidence="4">Sixty percent of animals display an egg laying defective phenotype. Animals display numerous defects in the reproductive system and have a reduced brood size.</text>
</comment>
<comment type="similarity">
    <text evidence="7">Belongs to the bZIP family. Jun subfamily.</text>
</comment>
<comment type="sequence caution" evidence="7">
    <molecule>Isoform b</molecule>
    <conflict type="erroneous initiation">
        <sequence resource="EMBL-CDS" id="CAI46586"/>
    </conflict>
    <text>Truncated N-terminus.</text>
</comment>
<reference evidence="9" key="1">
    <citation type="journal article" date="2009" name="Mol. Biol. Cell">
        <title>Caenorhabditis elegans FOS-1 and JUN-1 regulate plc-1 expression in the spermatheca to control ovulation.</title>
        <authorList>
            <person name="Hiatt S.M."/>
            <person name="Duren H.M."/>
            <person name="Shyu Y.J."/>
            <person name="Ellis R.E."/>
            <person name="Hisamoto N."/>
            <person name="Matsumoto K."/>
            <person name="Kariya K."/>
            <person name="Kerppola T.K."/>
            <person name="Hu C.D."/>
        </authorList>
    </citation>
    <scope>NUCLEOTIDE SEQUENCE [MRNA] (ISOFORMS A; B; C; D; E AND F)</scope>
    <scope>FUNCTION</scope>
    <scope>TISSUE SPECIFICITY</scope>
    <scope>DISRUPTION PHENOTYPE</scope>
</reference>
<reference evidence="10" key="2">
    <citation type="journal article" date="1998" name="Science">
        <title>Genome sequence of the nematode C. elegans: a platform for investigating biology.</title>
        <authorList>
            <consortium name="The C. elegans sequencing consortium"/>
        </authorList>
    </citation>
    <scope>NUCLEOTIDE SEQUENCE [LARGE SCALE GENOMIC DNA]</scope>
    <source>
        <strain evidence="11">Bristol N2</strain>
    </source>
</reference>
<reference evidence="7" key="3">
    <citation type="journal article" date="2007" name="Development">
        <title>Co-regulation by Notch and Fos is required for cell fate specification of intermediate precursors during C. elegans uterine development.</title>
        <authorList>
            <person name="Oommen K.S."/>
            <person name="Newman A.P."/>
        </authorList>
    </citation>
    <scope>FUNCTION</scope>
    <scope>PROBABLE INTERACTION WITH FOS-1</scope>
</reference>
<reference evidence="7" key="4">
    <citation type="journal article" date="2014" name="Genesis">
        <title>C. elegans nuclear receptor NHR-6 functionally interacts with the jun-1 transcription factor during spermatheca development.</title>
        <authorList>
            <person name="Gissendanner C.R."/>
            <person name="Cardin D."/>
            <person name="Dubose C.J."/>
            <person name="El Sayed M."/>
            <person name="Harmson J.S."/>
            <person name="Praslicka B."/>
            <person name="Rowan B.G."/>
        </authorList>
    </citation>
    <scope>SUBCELLULAR LOCATION</scope>
    <scope>TISSUE SPECIFICITY</scope>
    <scope>DEVELOPMENTAL STAGE</scope>
</reference>
<name>JUN_CAEEL</name>
<organism>
    <name type="scientific">Caenorhabditis elegans</name>
    <dbReference type="NCBI Taxonomy" id="6239"/>
    <lineage>
        <taxon>Eukaryota</taxon>
        <taxon>Metazoa</taxon>
        <taxon>Ecdysozoa</taxon>
        <taxon>Nematoda</taxon>
        <taxon>Chromadorea</taxon>
        <taxon>Rhabditida</taxon>
        <taxon>Rhabditina</taxon>
        <taxon>Rhabditomorpha</taxon>
        <taxon>Rhabditoidea</taxon>
        <taxon>Rhabditidae</taxon>
        <taxon>Peloderinae</taxon>
        <taxon>Caenorhabditis</taxon>
    </lineage>
</organism>